<comment type="similarity">
    <text evidence="1">Belongs to the UPF0181 family.</text>
</comment>
<evidence type="ECO:0000255" key="1">
    <source>
        <dbReference type="HAMAP-Rule" id="MF_00507"/>
    </source>
</evidence>
<gene>
    <name type="ordered locus">APP7_0922</name>
</gene>
<sequence length="54" mass="5932">MDNALLSLTHEQQQAAVEQIQELMAQGVSSGEAIQIIANRLREAHQNNTSENNS</sequence>
<reference key="1">
    <citation type="submission" date="2008-06" db="EMBL/GenBank/DDBJ databases">
        <title>Genome and proteome analysis of A. pleuropneumoniae serotype 7.</title>
        <authorList>
            <person name="Linke B."/>
            <person name="Buettner F."/>
            <person name="Martinez-Arias R."/>
            <person name="Goesmann A."/>
            <person name="Baltes N."/>
            <person name="Tegetmeyer H."/>
            <person name="Singh M."/>
            <person name="Gerlach G.F."/>
        </authorList>
    </citation>
    <scope>NUCLEOTIDE SEQUENCE [LARGE SCALE GENOMIC DNA]</scope>
    <source>
        <strain>AP76</strain>
    </source>
</reference>
<accession>B3H1K2</accession>
<dbReference type="EMBL" id="CP001091">
    <property type="protein sequence ID" value="ACE61574.1"/>
    <property type="molecule type" value="Genomic_DNA"/>
</dbReference>
<dbReference type="SMR" id="B3H1K2"/>
<dbReference type="KEGG" id="apa:APP7_0922"/>
<dbReference type="HOGENOM" id="CLU_185263_1_1_6"/>
<dbReference type="Proteomes" id="UP000001226">
    <property type="component" value="Chromosome"/>
</dbReference>
<dbReference type="HAMAP" id="MF_00507">
    <property type="entry name" value="UPF0181"/>
    <property type="match status" value="1"/>
</dbReference>
<dbReference type="InterPro" id="IPR005371">
    <property type="entry name" value="UPF0181"/>
</dbReference>
<dbReference type="NCBIfam" id="NF003476">
    <property type="entry name" value="PRK05114.1"/>
    <property type="match status" value="1"/>
</dbReference>
<dbReference type="Pfam" id="PF03701">
    <property type="entry name" value="UPF0181"/>
    <property type="match status" value="1"/>
</dbReference>
<proteinExistence type="inferred from homology"/>
<organism>
    <name type="scientific">Actinobacillus pleuropneumoniae serotype 7 (strain AP76)</name>
    <dbReference type="NCBI Taxonomy" id="537457"/>
    <lineage>
        <taxon>Bacteria</taxon>
        <taxon>Pseudomonadati</taxon>
        <taxon>Pseudomonadota</taxon>
        <taxon>Gammaproteobacteria</taxon>
        <taxon>Pasteurellales</taxon>
        <taxon>Pasteurellaceae</taxon>
        <taxon>Actinobacillus</taxon>
    </lineage>
</organism>
<feature type="chain" id="PRO_1000127039" description="UPF0181 protein APP7_0922">
    <location>
        <begin position="1"/>
        <end position="54"/>
    </location>
</feature>
<name>Y922_ACTP7</name>
<protein>
    <recommendedName>
        <fullName evidence="1">UPF0181 protein APP7_0922</fullName>
    </recommendedName>
</protein>